<keyword id="KW-0028">Amino-acid biosynthesis</keyword>
<keyword id="KW-0368">Histidine biosynthesis</keyword>
<keyword id="KW-0378">Hydrolase</keyword>
<keyword id="KW-0486">Methionine biosynthesis</keyword>
<keyword id="KW-0511">Multifunctional enzyme</keyword>
<keyword id="KW-0521">NADP</keyword>
<keyword id="KW-0554">One-carbon metabolism</keyword>
<keyword id="KW-0560">Oxidoreductase</keyword>
<keyword id="KW-0658">Purine biosynthesis</keyword>
<proteinExistence type="inferred from homology"/>
<evidence type="ECO:0000250" key="1"/>
<evidence type="ECO:0000255" key="2">
    <source>
        <dbReference type="HAMAP-Rule" id="MF_01576"/>
    </source>
</evidence>
<protein>
    <recommendedName>
        <fullName evidence="2">Bifunctional protein FolD</fullName>
    </recommendedName>
    <domain>
        <recommendedName>
            <fullName evidence="2">Methylenetetrahydrofolate dehydrogenase</fullName>
            <ecNumber evidence="2">1.5.1.5</ecNumber>
        </recommendedName>
    </domain>
    <domain>
        <recommendedName>
            <fullName evidence="2">Methenyltetrahydrofolate cyclohydrolase</fullName>
            <ecNumber evidence="2">3.5.4.9</ecNumber>
        </recommendedName>
    </domain>
</protein>
<reference key="1">
    <citation type="journal article" date="2004" name="Nat. Genet.">
        <title>Comparison of genome degradation in Paratyphi A and Typhi, human-restricted serovars of Salmonella enterica that cause typhoid.</title>
        <authorList>
            <person name="McClelland M."/>
            <person name="Sanderson K.E."/>
            <person name="Clifton S.W."/>
            <person name="Latreille P."/>
            <person name="Porwollik S."/>
            <person name="Sabo A."/>
            <person name="Meyer R."/>
            <person name="Bieri T."/>
            <person name="Ozersky P."/>
            <person name="McLellan M."/>
            <person name="Harkins C.R."/>
            <person name="Wang C."/>
            <person name="Nguyen C."/>
            <person name="Berghoff A."/>
            <person name="Elliott G."/>
            <person name="Kohlberg S."/>
            <person name="Strong C."/>
            <person name="Du F."/>
            <person name="Carter J."/>
            <person name="Kremizki C."/>
            <person name="Layman D."/>
            <person name="Leonard S."/>
            <person name="Sun H."/>
            <person name="Fulton L."/>
            <person name="Nash W."/>
            <person name="Miner T."/>
            <person name="Minx P."/>
            <person name="Delehaunty K."/>
            <person name="Fronick C."/>
            <person name="Magrini V."/>
            <person name="Nhan M."/>
            <person name="Warren W."/>
            <person name="Florea L."/>
            <person name="Spieth J."/>
            <person name="Wilson R.K."/>
        </authorList>
    </citation>
    <scope>NUCLEOTIDE SEQUENCE [LARGE SCALE GENOMIC DNA]</scope>
    <source>
        <strain>ATCC 9150 / SARB42</strain>
    </source>
</reference>
<sequence length="288" mass="30844">MAAKIIDGKTIAQQVRSEVAQKVQARVAAGLRAPGLAVVLVGSNPASQIYVASKRKACDEVGFVSRSYDLPETTSEAELLALIDTLNADNTIDGILVQLPLPAGIDNVKVLERIAPDKDVDGFHPYNVGRLCQRAPRLRPCTPRGIVTLLERYNIDTYGLNAVVIGASNIVGRPMSMELLLAGCTTTVTHRFTKDLRHHVEHADLLIVAVGKPGFIPGEWIKEGAIVIDVGINRLENGKVVGDVVFDEAAARASYITPVPGGVGPMTVATLIENTLQACIEYHDPQGK</sequence>
<gene>
    <name evidence="2" type="primary">folD</name>
    <name type="ordered locus">SPA2183</name>
</gene>
<name>FOLD_SALPA</name>
<dbReference type="EC" id="1.5.1.5" evidence="2"/>
<dbReference type="EC" id="3.5.4.9" evidence="2"/>
<dbReference type="EMBL" id="CP000026">
    <property type="protein sequence ID" value="AAV78072.1"/>
    <property type="molecule type" value="Genomic_DNA"/>
</dbReference>
<dbReference type="RefSeq" id="WP_000729165.1">
    <property type="nucleotide sequence ID" value="NC_006511.1"/>
</dbReference>
<dbReference type="SMR" id="Q5PCE5"/>
<dbReference type="KEGG" id="spt:SPA2183"/>
<dbReference type="HOGENOM" id="CLU_034045_2_1_6"/>
<dbReference type="UniPathway" id="UPA00193"/>
<dbReference type="Proteomes" id="UP000008185">
    <property type="component" value="Chromosome"/>
</dbReference>
<dbReference type="GO" id="GO:0005829">
    <property type="term" value="C:cytosol"/>
    <property type="evidence" value="ECO:0007669"/>
    <property type="project" value="TreeGrafter"/>
</dbReference>
<dbReference type="GO" id="GO:0004477">
    <property type="term" value="F:methenyltetrahydrofolate cyclohydrolase activity"/>
    <property type="evidence" value="ECO:0007669"/>
    <property type="project" value="UniProtKB-UniRule"/>
</dbReference>
<dbReference type="GO" id="GO:0004488">
    <property type="term" value="F:methylenetetrahydrofolate dehydrogenase (NADP+) activity"/>
    <property type="evidence" value="ECO:0007669"/>
    <property type="project" value="UniProtKB-UniRule"/>
</dbReference>
<dbReference type="GO" id="GO:0000105">
    <property type="term" value="P:L-histidine biosynthetic process"/>
    <property type="evidence" value="ECO:0007669"/>
    <property type="project" value="UniProtKB-KW"/>
</dbReference>
<dbReference type="GO" id="GO:0009086">
    <property type="term" value="P:methionine biosynthetic process"/>
    <property type="evidence" value="ECO:0007669"/>
    <property type="project" value="UniProtKB-KW"/>
</dbReference>
<dbReference type="GO" id="GO:0006164">
    <property type="term" value="P:purine nucleotide biosynthetic process"/>
    <property type="evidence" value="ECO:0007669"/>
    <property type="project" value="UniProtKB-KW"/>
</dbReference>
<dbReference type="GO" id="GO:0035999">
    <property type="term" value="P:tetrahydrofolate interconversion"/>
    <property type="evidence" value="ECO:0007669"/>
    <property type="project" value="UniProtKB-UniRule"/>
</dbReference>
<dbReference type="CDD" id="cd01080">
    <property type="entry name" value="NAD_bind_m-THF_DH_Cyclohyd"/>
    <property type="match status" value="1"/>
</dbReference>
<dbReference type="FunFam" id="3.40.50.10860:FF:000001">
    <property type="entry name" value="Bifunctional protein FolD"/>
    <property type="match status" value="1"/>
</dbReference>
<dbReference type="FunFam" id="3.40.50.720:FF:000006">
    <property type="entry name" value="Bifunctional protein FolD"/>
    <property type="match status" value="1"/>
</dbReference>
<dbReference type="Gene3D" id="3.40.50.10860">
    <property type="entry name" value="Leucine Dehydrogenase, chain A, domain 1"/>
    <property type="match status" value="1"/>
</dbReference>
<dbReference type="Gene3D" id="3.40.50.720">
    <property type="entry name" value="NAD(P)-binding Rossmann-like Domain"/>
    <property type="match status" value="1"/>
</dbReference>
<dbReference type="HAMAP" id="MF_01576">
    <property type="entry name" value="THF_DHG_CYH"/>
    <property type="match status" value="1"/>
</dbReference>
<dbReference type="InterPro" id="IPR046346">
    <property type="entry name" value="Aminoacid_DH-like_N_sf"/>
</dbReference>
<dbReference type="InterPro" id="IPR036291">
    <property type="entry name" value="NAD(P)-bd_dom_sf"/>
</dbReference>
<dbReference type="InterPro" id="IPR000672">
    <property type="entry name" value="THF_DH/CycHdrlase"/>
</dbReference>
<dbReference type="InterPro" id="IPR020630">
    <property type="entry name" value="THF_DH/CycHdrlase_cat_dom"/>
</dbReference>
<dbReference type="InterPro" id="IPR020867">
    <property type="entry name" value="THF_DH/CycHdrlase_CS"/>
</dbReference>
<dbReference type="InterPro" id="IPR020631">
    <property type="entry name" value="THF_DH/CycHdrlase_NAD-bd_dom"/>
</dbReference>
<dbReference type="NCBIfam" id="NF008058">
    <property type="entry name" value="PRK10792.1"/>
    <property type="match status" value="1"/>
</dbReference>
<dbReference type="NCBIfam" id="NF010783">
    <property type="entry name" value="PRK14186.1"/>
    <property type="match status" value="1"/>
</dbReference>
<dbReference type="PANTHER" id="PTHR48099:SF5">
    <property type="entry name" value="C-1-TETRAHYDROFOLATE SYNTHASE, CYTOPLASMIC"/>
    <property type="match status" value="1"/>
</dbReference>
<dbReference type="PANTHER" id="PTHR48099">
    <property type="entry name" value="C-1-TETRAHYDROFOLATE SYNTHASE, CYTOPLASMIC-RELATED"/>
    <property type="match status" value="1"/>
</dbReference>
<dbReference type="Pfam" id="PF00763">
    <property type="entry name" value="THF_DHG_CYH"/>
    <property type="match status" value="1"/>
</dbReference>
<dbReference type="Pfam" id="PF02882">
    <property type="entry name" value="THF_DHG_CYH_C"/>
    <property type="match status" value="1"/>
</dbReference>
<dbReference type="PRINTS" id="PR00085">
    <property type="entry name" value="THFDHDRGNASE"/>
</dbReference>
<dbReference type="SUPFAM" id="SSF53223">
    <property type="entry name" value="Aminoacid dehydrogenase-like, N-terminal domain"/>
    <property type="match status" value="1"/>
</dbReference>
<dbReference type="SUPFAM" id="SSF51735">
    <property type="entry name" value="NAD(P)-binding Rossmann-fold domains"/>
    <property type="match status" value="1"/>
</dbReference>
<dbReference type="PROSITE" id="PS00766">
    <property type="entry name" value="THF_DHG_CYH_1"/>
    <property type="match status" value="1"/>
</dbReference>
<dbReference type="PROSITE" id="PS00767">
    <property type="entry name" value="THF_DHG_CYH_2"/>
    <property type="match status" value="1"/>
</dbReference>
<accession>Q5PCE5</accession>
<feature type="initiator methionine" description="Removed" evidence="1">
    <location>
        <position position="1"/>
    </location>
</feature>
<feature type="chain" id="PRO_0000268491" description="Bifunctional protein FolD">
    <location>
        <begin position="2"/>
        <end position="288"/>
    </location>
</feature>
<feature type="binding site" evidence="2">
    <location>
        <begin position="166"/>
        <end position="168"/>
    </location>
    <ligand>
        <name>NADP(+)</name>
        <dbReference type="ChEBI" id="CHEBI:58349"/>
    </ligand>
</feature>
<feature type="binding site" evidence="2">
    <location>
        <position position="232"/>
    </location>
    <ligand>
        <name>NADP(+)</name>
        <dbReference type="ChEBI" id="CHEBI:58349"/>
    </ligand>
</feature>
<organism>
    <name type="scientific">Salmonella paratyphi A (strain ATCC 9150 / SARB42)</name>
    <dbReference type="NCBI Taxonomy" id="295319"/>
    <lineage>
        <taxon>Bacteria</taxon>
        <taxon>Pseudomonadati</taxon>
        <taxon>Pseudomonadota</taxon>
        <taxon>Gammaproteobacteria</taxon>
        <taxon>Enterobacterales</taxon>
        <taxon>Enterobacteriaceae</taxon>
        <taxon>Salmonella</taxon>
    </lineage>
</organism>
<comment type="function">
    <text evidence="2">Catalyzes the oxidation of 5,10-methylenetetrahydrofolate to 5,10-methenyltetrahydrofolate and then the hydrolysis of 5,10-methenyltetrahydrofolate to 10-formyltetrahydrofolate.</text>
</comment>
<comment type="catalytic activity">
    <reaction evidence="2">
        <text>(6R)-5,10-methylene-5,6,7,8-tetrahydrofolate + NADP(+) = (6R)-5,10-methenyltetrahydrofolate + NADPH</text>
        <dbReference type="Rhea" id="RHEA:22812"/>
        <dbReference type="ChEBI" id="CHEBI:15636"/>
        <dbReference type="ChEBI" id="CHEBI:57455"/>
        <dbReference type="ChEBI" id="CHEBI:57783"/>
        <dbReference type="ChEBI" id="CHEBI:58349"/>
        <dbReference type="EC" id="1.5.1.5"/>
    </reaction>
</comment>
<comment type="catalytic activity">
    <reaction evidence="2">
        <text>(6R)-5,10-methenyltetrahydrofolate + H2O = (6R)-10-formyltetrahydrofolate + H(+)</text>
        <dbReference type="Rhea" id="RHEA:23700"/>
        <dbReference type="ChEBI" id="CHEBI:15377"/>
        <dbReference type="ChEBI" id="CHEBI:15378"/>
        <dbReference type="ChEBI" id="CHEBI:57455"/>
        <dbReference type="ChEBI" id="CHEBI:195366"/>
        <dbReference type="EC" id="3.5.4.9"/>
    </reaction>
</comment>
<comment type="pathway">
    <text evidence="2">One-carbon metabolism; tetrahydrofolate interconversion.</text>
</comment>
<comment type="subunit">
    <text evidence="2">Homodimer.</text>
</comment>
<comment type="similarity">
    <text evidence="2">Belongs to the tetrahydrofolate dehydrogenase/cyclohydrolase family.</text>
</comment>